<accession>Q81G06</accession>
<keyword id="KW-0028">Amino-acid biosynthesis</keyword>
<keyword id="KW-0368">Histidine biosynthesis</keyword>
<keyword id="KW-0479">Metal-binding</keyword>
<keyword id="KW-0520">NAD</keyword>
<keyword id="KW-0560">Oxidoreductase</keyword>
<keyword id="KW-1185">Reference proteome</keyword>
<keyword id="KW-0862">Zinc</keyword>
<evidence type="ECO:0000255" key="1">
    <source>
        <dbReference type="HAMAP-Rule" id="MF_01024"/>
    </source>
</evidence>
<name>HISX_BACCR</name>
<feature type="chain" id="PRO_0000135722" description="Histidinol dehydrogenase">
    <location>
        <begin position="1"/>
        <end position="429"/>
    </location>
</feature>
<feature type="active site" description="Proton acceptor" evidence="1">
    <location>
        <position position="324"/>
    </location>
</feature>
<feature type="active site" description="Proton acceptor" evidence="1">
    <location>
        <position position="325"/>
    </location>
</feature>
<feature type="binding site" evidence="1">
    <location>
        <position position="127"/>
    </location>
    <ligand>
        <name>NAD(+)</name>
        <dbReference type="ChEBI" id="CHEBI:57540"/>
    </ligand>
</feature>
<feature type="binding site" evidence="1">
    <location>
        <position position="188"/>
    </location>
    <ligand>
        <name>NAD(+)</name>
        <dbReference type="ChEBI" id="CHEBI:57540"/>
    </ligand>
</feature>
<feature type="binding site" evidence="1">
    <location>
        <position position="211"/>
    </location>
    <ligand>
        <name>NAD(+)</name>
        <dbReference type="ChEBI" id="CHEBI:57540"/>
    </ligand>
</feature>
<feature type="binding site" evidence="1">
    <location>
        <position position="234"/>
    </location>
    <ligand>
        <name>substrate</name>
    </ligand>
</feature>
<feature type="binding site" evidence="1">
    <location>
        <position position="256"/>
    </location>
    <ligand>
        <name>substrate</name>
    </ligand>
</feature>
<feature type="binding site" evidence="1">
    <location>
        <position position="256"/>
    </location>
    <ligand>
        <name>Zn(2+)</name>
        <dbReference type="ChEBI" id="CHEBI:29105"/>
    </ligand>
</feature>
<feature type="binding site" evidence="1">
    <location>
        <position position="259"/>
    </location>
    <ligand>
        <name>substrate</name>
    </ligand>
</feature>
<feature type="binding site" evidence="1">
    <location>
        <position position="259"/>
    </location>
    <ligand>
        <name>Zn(2+)</name>
        <dbReference type="ChEBI" id="CHEBI:29105"/>
    </ligand>
</feature>
<feature type="binding site" evidence="1">
    <location>
        <position position="325"/>
    </location>
    <ligand>
        <name>substrate</name>
    </ligand>
</feature>
<feature type="binding site" evidence="1">
    <location>
        <position position="358"/>
    </location>
    <ligand>
        <name>substrate</name>
    </ligand>
</feature>
<feature type="binding site" evidence="1">
    <location>
        <position position="358"/>
    </location>
    <ligand>
        <name>Zn(2+)</name>
        <dbReference type="ChEBI" id="CHEBI:29105"/>
    </ligand>
</feature>
<feature type="binding site" evidence="1">
    <location>
        <position position="412"/>
    </location>
    <ligand>
        <name>substrate</name>
    </ligand>
</feature>
<feature type="binding site" evidence="1">
    <location>
        <position position="417"/>
    </location>
    <ligand>
        <name>substrate</name>
    </ligand>
</feature>
<feature type="binding site" evidence="1">
    <location>
        <position position="417"/>
    </location>
    <ligand>
        <name>Zn(2+)</name>
        <dbReference type="ChEBI" id="CHEBI:29105"/>
    </ligand>
</feature>
<organism>
    <name type="scientific">Bacillus cereus (strain ATCC 14579 / DSM 31 / CCUG 7414 / JCM 2152 / NBRC 15305 / NCIMB 9373 / NCTC 2599 / NRRL B-3711)</name>
    <dbReference type="NCBI Taxonomy" id="226900"/>
    <lineage>
        <taxon>Bacteria</taxon>
        <taxon>Bacillati</taxon>
        <taxon>Bacillota</taxon>
        <taxon>Bacilli</taxon>
        <taxon>Bacillales</taxon>
        <taxon>Bacillaceae</taxon>
        <taxon>Bacillus</taxon>
        <taxon>Bacillus cereus group</taxon>
    </lineage>
</organism>
<reference key="1">
    <citation type="journal article" date="2003" name="Nature">
        <title>Genome sequence of Bacillus cereus and comparative analysis with Bacillus anthracis.</title>
        <authorList>
            <person name="Ivanova N."/>
            <person name="Sorokin A."/>
            <person name="Anderson I."/>
            <person name="Galleron N."/>
            <person name="Candelon B."/>
            <person name="Kapatral V."/>
            <person name="Bhattacharyya A."/>
            <person name="Reznik G."/>
            <person name="Mikhailova N."/>
            <person name="Lapidus A."/>
            <person name="Chu L."/>
            <person name="Mazur M."/>
            <person name="Goltsman E."/>
            <person name="Larsen N."/>
            <person name="D'Souza M."/>
            <person name="Walunas T."/>
            <person name="Grechkin Y."/>
            <person name="Pusch G."/>
            <person name="Haselkorn R."/>
            <person name="Fonstein M."/>
            <person name="Ehrlich S.D."/>
            <person name="Overbeek R."/>
            <person name="Kyrpides N.C."/>
        </authorList>
    </citation>
    <scope>NUCLEOTIDE SEQUENCE [LARGE SCALE GENOMIC DNA]</scope>
    <source>
        <strain>ATCC 14579 / DSM 31 / CCUG 7414 / JCM 2152 / NBRC 15305 / NCIMB 9373 / NCTC 2599 / NRRL B-3711</strain>
    </source>
</reference>
<dbReference type="EC" id="1.1.1.23" evidence="1"/>
<dbReference type="EMBL" id="AE016877">
    <property type="protein sequence ID" value="AAP08387.1"/>
    <property type="molecule type" value="Genomic_DNA"/>
</dbReference>
<dbReference type="RefSeq" id="NP_831186.1">
    <property type="nucleotide sequence ID" value="NC_004722.1"/>
</dbReference>
<dbReference type="RefSeq" id="WP_000402931.1">
    <property type="nucleotide sequence ID" value="NC_004722.1"/>
</dbReference>
<dbReference type="SMR" id="Q81G06"/>
<dbReference type="STRING" id="226900.BC_1406"/>
<dbReference type="KEGG" id="bce:BC1406"/>
<dbReference type="PATRIC" id="fig|226900.8.peg.1383"/>
<dbReference type="HOGENOM" id="CLU_006732_3_3_9"/>
<dbReference type="OrthoDB" id="9805269at2"/>
<dbReference type="UniPathway" id="UPA00031">
    <property type="reaction ID" value="UER00014"/>
</dbReference>
<dbReference type="Proteomes" id="UP000001417">
    <property type="component" value="Chromosome"/>
</dbReference>
<dbReference type="GO" id="GO:0005737">
    <property type="term" value="C:cytoplasm"/>
    <property type="evidence" value="ECO:0000318"/>
    <property type="project" value="GO_Central"/>
</dbReference>
<dbReference type="GO" id="GO:0005829">
    <property type="term" value="C:cytosol"/>
    <property type="evidence" value="ECO:0000318"/>
    <property type="project" value="GO_Central"/>
</dbReference>
<dbReference type="GO" id="GO:0004399">
    <property type="term" value="F:histidinol dehydrogenase activity"/>
    <property type="evidence" value="ECO:0000318"/>
    <property type="project" value="GO_Central"/>
</dbReference>
<dbReference type="GO" id="GO:0051287">
    <property type="term" value="F:NAD binding"/>
    <property type="evidence" value="ECO:0007669"/>
    <property type="project" value="InterPro"/>
</dbReference>
<dbReference type="GO" id="GO:0008270">
    <property type="term" value="F:zinc ion binding"/>
    <property type="evidence" value="ECO:0007669"/>
    <property type="project" value="UniProtKB-UniRule"/>
</dbReference>
<dbReference type="GO" id="GO:0000105">
    <property type="term" value="P:L-histidine biosynthetic process"/>
    <property type="evidence" value="ECO:0000318"/>
    <property type="project" value="GO_Central"/>
</dbReference>
<dbReference type="CDD" id="cd06572">
    <property type="entry name" value="Histidinol_dh"/>
    <property type="match status" value="1"/>
</dbReference>
<dbReference type="FunFam" id="3.40.50.1980:FF:000001">
    <property type="entry name" value="Histidinol dehydrogenase"/>
    <property type="match status" value="1"/>
</dbReference>
<dbReference type="FunFam" id="3.40.50.1980:FF:000026">
    <property type="entry name" value="Histidinol dehydrogenase"/>
    <property type="match status" value="1"/>
</dbReference>
<dbReference type="FunFam" id="1.20.5.1300:FF:000002">
    <property type="entry name" value="Histidinol dehydrogenase, chloroplastic"/>
    <property type="match status" value="1"/>
</dbReference>
<dbReference type="Gene3D" id="1.20.5.1300">
    <property type="match status" value="1"/>
</dbReference>
<dbReference type="Gene3D" id="3.40.50.1980">
    <property type="entry name" value="Nitrogenase molybdenum iron protein domain"/>
    <property type="match status" value="2"/>
</dbReference>
<dbReference type="HAMAP" id="MF_01024">
    <property type="entry name" value="HisD"/>
    <property type="match status" value="1"/>
</dbReference>
<dbReference type="InterPro" id="IPR016161">
    <property type="entry name" value="Ald_DH/histidinol_DH"/>
</dbReference>
<dbReference type="InterPro" id="IPR001692">
    <property type="entry name" value="Histidinol_DH_CS"/>
</dbReference>
<dbReference type="InterPro" id="IPR022695">
    <property type="entry name" value="Histidinol_DH_monofunct"/>
</dbReference>
<dbReference type="InterPro" id="IPR012131">
    <property type="entry name" value="Hstdl_DH"/>
</dbReference>
<dbReference type="NCBIfam" id="TIGR00069">
    <property type="entry name" value="hisD"/>
    <property type="match status" value="1"/>
</dbReference>
<dbReference type="PANTHER" id="PTHR21256:SF2">
    <property type="entry name" value="HISTIDINE BIOSYNTHESIS TRIFUNCTIONAL PROTEIN"/>
    <property type="match status" value="1"/>
</dbReference>
<dbReference type="PANTHER" id="PTHR21256">
    <property type="entry name" value="HISTIDINOL DEHYDROGENASE HDH"/>
    <property type="match status" value="1"/>
</dbReference>
<dbReference type="Pfam" id="PF00815">
    <property type="entry name" value="Histidinol_dh"/>
    <property type="match status" value="1"/>
</dbReference>
<dbReference type="PIRSF" id="PIRSF000099">
    <property type="entry name" value="Histidinol_dh"/>
    <property type="match status" value="1"/>
</dbReference>
<dbReference type="PRINTS" id="PR00083">
    <property type="entry name" value="HOLDHDRGNASE"/>
</dbReference>
<dbReference type="SUPFAM" id="SSF53720">
    <property type="entry name" value="ALDH-like"/>
    <property type="match status" value="1"/>
</dbReference>
<dbReference type="PROSITE" id="PS00611">
    <property type="entry name" value="HISOL_DEHYDROGENASE"/>
    <property type="match status" value="1"/>
</dbReference>
<proteinExistence type="inferred from homology"/>
<protein>
    <recommendedName>
        <fullName evidence="1">Histidinol dehydrogenase</fullName>
        <shortName evidence="1">HDH</shortName>
        <ecNumber evidence="1">1.1.1.23</ecNumber>
    </recommendedName>
</protein>
<comment type="function">
    <text evidence="1">Catalyzes the sequential NAD-dependent oxidations of L-histidinol to L-histidinaldehyde and then to L-histidine.</text>
</comment>
<comment type="catalytic activity">
    <reaction evidence="1">
        <text>L-histidinol + 2 NAD(+) + H2O = L-histidine + 2 NADH + 3 H(+)</text>
        <dbReference type="Rhea" id="RHEA:20641"/>
        <dbReference type="ChEBI" id="CHEBI:15377"/>
        <dbReference type="ChEBI" id="CHEBI:15378"/>
        <dbReference type="ChEBI" id="CHEBI:57540"/>
        <dbReference type="ChEBI" id="CHEBI:57595"/>
        <dbReference type="ChEBI" id="CHEBI:57699"/>
        <dbReference type="ChEBI" id="CHEBI:57945"/>
        <dbReference type="EC" id="1.1.1.23"/>
    </reaction>
</comment>
<comment type="cofactor">
    <cofactor evidence="1">
        <name>Zn(2+)</name>
        <dbReference type="ChEBI" id="CHEBI:29105"/>
    </cofactor>
    <text evidence="1">Binds 1 zinc ion per subunit.</text>
</comment>
<comment type="pathway">
    <text evidence="1">Amino-acid biosynthesis; L-histidine biosynthesis; L-histidine from 5-phospho-alpha-D-ribose 1-diphosphate: step 9/9.</text>
</comment>
<comment type="similarity">
    <text evidence="1">Belongs to the histidinol dehydrogenase family.</text>
</comment>
<sequence>MEIIYEEFKEALSKIKVLRENANIIEETVQRSVREIIRHVREGKDEALSFYTKKFDGVEMKNFRVSEEEIQQASMFVENSFLEALKEAKKNVVSYHEKQKKHSIFDCESKGIIRGQLIRPLENIGVYVPGGTASYPSSVLMNVLPAKLAGVKKIVMVTPPRKGGIDPHILAAADLAGVDEIYTIGGAQAIAALAYGTESIPKVDKIVGPGNLYVALAKREVYGIVNIDMIAGPSEIVVVADETGNAKYIAADLLSQAEHDERATAICITTNMELAKEVEKEVERQLETLPRSEIARESINRNGAIFIVPSLEEALKLSNEIAPEHLELHIKEPMNALDYVKHAGSIFLGPYSPEPLGDYLAGPNHVLPTSGTARFFSPLSVDDFVKKSSFISYTEEALKNVQHHIVELANKEGLHAHARAIQIRFEEEK</sequence>
<gene>
    <name evidence="1" type="primary">hisD</name>
    <name type="ordered locus">BC_1406</name>
</gene>